<protein>
    <recommendedName>
        <fullName>Engulfment and cell motility protein 3</fullName>
    </recommendedName>
</protein>
<comment type="function">
    <text evidence="1">Involved in cytoskeletal rearrangements required for phagocytosis of apoptotic cells and cell motility. Acts in association with DOCK1 and CRK. Was initially proposed to be required in complex with DOCK1 to activate Rac Rho small GTPases. May enhance the guanine nucleotide exchange factor (GEF) activity of DOCK1 (By similarity).</text>
</comment>
<comment type="subunit">
    <text evidence="1 4">Probably interacts directly with the SH3-domain of DOCK1 via its SH3-binding site. Part of a complex with DOCK1 and RAC1 (By similarity). Interacts with ADGRB3 (PubMed:24567399).</text>
</comment>
<comment type="subcellular location">
    <subcellularLocation>
        <location evidence="1">Cytoplasm</location>
    </subcellularLocation>
</comment>
<comment type="alternative products">
    <event type="alternative splicing"/>
    <isoform>
        <id>Q96BJ8-1</id>
        <name>2</name>
        <sequence type="displayed"/>
    </isoform>
    <isoform>
        <id>Q96BJ8-2</id>
        <name>1</name>
        <sequence type="described" ref="VSP_037341"/>
    </isoform>
    <isoform>
        <id>Q96BJ8-3</id>
        <name>3</name>
        <sequence type="described" ref="VSP_037342"/>
    </isoform>
</comment>
<dbReference type="EMBL" id="AK300976">
    <property type="protein sequence ID" value="BAG62598.1"/>
    <property type="molecule type" value="mRNA"/>
</dbReference>
<dbReference type="EMBL" id="AK023886">
    <property type="protein sequence ID" value="BAB14712.1"/>
    <property type="molecule type" value="mRNA"/>
</dbReference>
<dbReference type="EMBL" id="AC040160">
    <property type="status" value="NOT_ANNOTATED_CDS"/>
    <property type="molecule type" value="Genomic_DNA"/>
</dbReference>
<dbReference type="EMBL" id="BC015524">
    <property type="protein sequence ID" value="AAH15524.1"/>
    <property type="molecule type" value="mRNA"/>
</dbReference>
<dbReference type="EMBL" id="BC034410">
    <property type="protein sequence ID" value="AAH34410.2"/>
    <property type="molecule type" value="mRNA"/>
</dbReference>
<dbReference type="CCDS" id="CCDS10833.3">
    <molecule id="Q96BJ8-1"/>
</dbReference>
<dbReference type="RefSeq" id="NP_078988.3">
    <molecule id="Q96BJ8-1"/>
    <property type="nucleotide sequence ID" value="NM_024712.5"/>
</dbReference>
<dbReference type="SMR" id="Q96BJ8"/>
<dbReference type="BioGRID" id="122872">
    <property type="interactions" value="68"/>
</dbReference>
<dbReference type="FunCoup" id="Q96BJ8">
    <property type="interactions" value="303"/>
</dbReference>
<dbReference type="IntAct" id="Q96BJ8">
    <property type="interactions" value="38"/>
</dbReference>
<dbReference type="STRING" id="9606.ENSP00000498602"/>
<dbReference type="GlyGen" id="Q96BJ8">
    <property type="glycosylation" value="2 sites, 1 O-linked glycan (2 sites)"/>
</dbReference>
<dbReference type="iPTMnet" id="Q96BJ8"/>
<dbReference type="PhosphoSitePlus" id="Q96BJ8"/>
<dbReference type="BioMuta" id="ELMO3"/>
<dbReference type="DMDM" id="238054390"/>
<dbReference type="jPOST" id="Q96BJ8"/>
<dbReference type="MassIVE" id="Q96BJ8"/>
<dbReference type="PaxDb" id="9606-ENSP00000377566"/>
<dbReference type="PeptideAtlas" id="Q96BJ8"/>
<dbReference type="ProteomicsDB" id="76083">
    <molecule id="Q96BJ8-1"/>
</dbReference>
<dbReference type="ProteomicsDB" id="76084">
    <molecule id="Q96BJ8-2"/>
</dbReference>
<dbReference type="ProteomicsDB" id="76085">
    <molecule id="Q96BJ8-3"/>
</dbReference>
<dbReference type="Pumba" id="Q96BJ8"/>
<dbReference type="Antibodypedia" id="15666">
    <property type="antibodies" value="202 antibodies from 29 providers"/>
</dbReference>
<dbReference type="DNASU" id="79767"/>
<dbReference type="Ensembl" id="ENST00000393997.8">
    <molecule id="Q96BJ8-1"/>
    <property type="protein sequence ID" value="ENSP00000377566.3"/>
    <property type="gene ID" value="ENSG00000102890.16"/>
</dbReference>
<dbReference type="Ensembl" id="ENST00000477898.5">
    <molecule id="Q96BJ8-2"/>
    <property type="protein sequence ID" value="ENSP00000458539.1"/>
    <property type="gene ID" value="ENSG00000102890.16"/>
</dbReference>
<dbReference type="Ensembl" id="ENST00000652269.1">
    <molecule id="Q96BJ8-3"/>
    <property type="protein sequence ID" value="ENSP00000498602.1"/>
    <property type="gene ID" value="ENSG00000102890.16"/>
</dbReference>
<dbReference type="GeneID" id="79767"/>
<dbReference type="KEGG" id="hsa:79767"/>
<dbReference type="MANE-Select" id="ENST00000393997.8">
    <property type="protein sequence ID" value="ENSP00000377566.3"/>
    <property type="RefSeq nucleotide sequence ID" value="NM_024712.5"/>
    <property type="RefSeq protein sequence ID" value="NP_078988.3"/>
</dbReference>
<dbReference type="UCSC" id="uc002esa.4">
    <molecule id="Q96BJ8-1"/>
    <property type="organism name" value="human"/>
</dbReference>
<dbReference type="AGR" id="HGNC:17289"/>
<dbReference type="CTD" id="79767"/>
<dbReference type="DisGeNET" id="79767"/>
<dbReference type="GeneCards" id="ELMO3"/>
<dbReference type="HGNC" id="HGNC:17289">
    <property type="gene designation" value="ELMO3"/>
</dbReference>
<dbReference type="HPA" id="ENSG00000102890">
    <property type="expression patterns" value="Low tissue specificity"/>
</dbReference>
<dbReference type="MIM" id="606422">
    <property type="type" value="gene"/>
</dbReference>
<dbReference type="neXtProt" id="NX_Q96BJ8"/>
<dbReference type="OpenTargets" id="ENSG00000102890"/>
<dbReference type="PharmGKB" id="PA27756"/>
<dbReference type="VEuPathDB" id="HostDB:ENSG00000102890"/>
<dbReference type="eggNOG" id="KOG2999">
    <property type="taxonomic scope" value="Eukaryota"/>
</dbReference>
<dbReference type="GeneTree" id="ENSGT00940000159455"/>
<dbReference type="HOGENOM" id="CLU_023887_0_0_1"/>
<dbReference type="InParanoid" id="Q96BJ8"/>
<dbReference type="OrthoDB" id="28413at2759"/>
<dbReference type="PAN-GO" id="Q96BJ8">
    <property type="GO annotations" value="2 GO annotations based on evolutionary models"/>
</dbReference>
<dbReference type="PhylomeDB" id="Q96BJ8"/>
<dbReference type="TreeFam" id="TF312966"/>
<dbReference type="PathwayCommons" id="Q96BJ8"/>
<dbReference type="SignaLink" id="Q96BJ8"/>
<dbReference type="BioGRID-ORCS" id="79767">
    <property type="hits" value="15 hits in 1153 CRISPR screens"/>
</dbReference>
<dbReference type="GenomeRNAi" id="79767"/>
<dbReference type="Pharos" id="Q96BJ8">
    <property type="development level" value="Tbio"/>
</dbReference>
<dbReference type="PRO" id="PR:Q96BJ8"/>
<dbReference type="Proteomes" id="UP000005640">
    <property type="component" value="Chromosome 16"/>
</dbReference>
<dbReference type="RNAct" id="Q96BJ8">
    <property type="molecule type" value="protein"/>
</dbReference>
<dbReference type="Bgee" id="ENSG00000102890">
    <property type="expression patterns" value="Expressed in mucosa of transverse colon and 127 other cell types or tissues"/>
</dbReference>
<dbReference type="ExpressionAtlas" id="Q96BJ8">
    <property type="expression patterns" value="baseline and differential"/>
</dbReference>
<dbReference type="GO" id="GO:0005737">
    <property type="term" value="C:cytoplasm"/>
    <property type="evidence" value="ECO:0007669"/>
    <property type="project" value="UniProtKB-SubCell"/>
</dbReference>
<dbReference type="GO" id="GO:0017124">
    <property type="term" value="F:SH3 domain binding"/>
    <property type="evidence" value="ECO:0007669"/>
    <property type="project" value="UniProtKB-KW"/>
</dbReference>
<dbReference type="GO" id="GO:0007015">
    <property type="term" value="P:actin filament organization"/>
    <property type="evidence" value="ECO:0000318"/>
    <property type="project" value="GO_Central"/>
</dbReference>
<dbReference type="GO" id="GO:0006915">
    <property type="term" value="P:apoptotic process"/>
    <property type="evidence" value="ECO:0007669"/>
    <property type="project" value="UniProtKB-KW"/>
</dbReference>
<dbReference type="GO" id="GO:0048870">
    <property type="term" value="P:cell motility"/>
    <property type="evidence" value="ECO:0000318"/>
    <property type="project" value="GO_Central"/>
</dbReference>
<dbReference type="GO" id="GO:0006909">
    <property type="term" value="P:phagocytosis"/>
    <property type="evidence" value="ECO:0007669"/>
    <property type="project" value="UniProtKB-KW"/>
</dbReference>
<dbReference type="CDD" id="cd13359">
    <property type="entry name" value="PH_ELMO1_CED-12"/>
    <property type="match status" value="1"/>
</dbReference>
<dbReference type="Gene3D" id="6.10.250.810">
    <property type="match status" value="1"/>
</dbReference>
<dbReference type="Gene3D" id="1.25.10.10">
    <property type="entry name" value="Leucine-rich Repeat Variant"/>
    <property type="match status" value="1"/>
</dbReference>
<dbReference type="Gene3D" id="2.30.29.30">
    <property type="entry name" value="Pleckstrin-homology domain (PH domain)/Phosphotyrosine-binding domain (PTB)"/>
    <property type="match status" value="1"/>
</dbReference>
<dbReference type="InterPro" id="IPR011989">
    <property type="entry name" value="ARM-like"/>
</dbReference>
<dbReference type="InterPro" id="IPR016024">
    <property type="entry name" value="ARM-type_fold"/>
</dbReference>
<dbReference type="InterPro" id="IPR024574">
    <property type="entry name" value="ELMO_ARM"/>
</dbReference>
<dbReference type="InterPro" id="IPR006816">
    <property type="entry name" value="ELMO_dom"/>
</dbReference>
<dbReference type="InterPro" id="IPR050868">
    <property type="entry name" value="ELMO_domain-containing"/>
</dbReference>
<dbReference type="InterPro" id="IPR011993">
    <property type="entry name" value="PH-like_dom_sf"/>
</dbReference>
<dbReference type="InterPro" id="IPR001849">
    <property type="entry name" value="PH_domain"/>
</dbReference>
<dbReference type="PANTHER" id="PTHR12771">
    <property type="entry name" value="ENGULFMENT AND CELL MOTILITY"/>
    <property type="match status" value="1"/>
</dbReference>
<dbReference type="PANTHER" id="PTHR12771:SF16">
    <property type="entry name" value="ENGULFMENT AND CELL MOTILITY PROTEIN 3"/>
    <property type="match status" value="1"/>
</dbReference>
<dbReference type="Pfam" id="PF11841">
    <property type="entry name" value="ELMO_ARM"/>
    <property type="match status" value="1"/>
</dbReference>
<dbReference type="Pfam" id="PF04727">
    <property type="entry name" value="ELMO_CED12"/>
    <property type="match status" value="1"/>
</dbReference>
<dbReference type="Pfam" id="PF16457">
    <property type="entry name" value="PH_12"/>
    <property type="match status" value="1"/>
</dbReference>
<dbReference type="SUPFAM" id="SSF48371">
    <property type="entry name" value="ARM repeat"/>
    <property type="match status" value="1"/>
</dbReference>
<dbReference type="SUPFAM" id="SSF50729">
    <property type="entry name" value="PH domain-like"/>
    <property type="match status" value="1"/>
</dbReference>
<dbReference type="PROSITE" id="PS51335">
    <property type="entry name" value="ELMO"/>
    <property type="match status" value="1"/>
</dbReference>
<reference key="1">
    <citation type="journal article" date="2004" name="Nat. Genet.">
        <title>Complete sequencing and characterization of 21,243 full-length human cDNAs.</title>
        <authorList>
            <person name="Ota T."/>
            <person name="Suzuki Y."/>
            <person name="Nishikawa T."/>
            <person name="Otsuki T."/>
            <person name="Sugiyama T."/>
            <person name="Irie R."/>
            <person name="Wakamatsu A."/>
            <person name="Hayashi K."/>
            <person name="Sato H."/>
            <person name="Nagai K."/>
            <person name="Kimura K."/>
            <person name="Makita H."/>
            <person name="Sekine M."/>
            <person name="Obayashi M."/>
            <person name="Nishi T."/>
            <person name="Shibahara T."/>
            <person name="Tanaka T."/>
            <person name="Ishii S."/>
            <person name="Yamamoto J."/>
            <person name="Saito K."/>
            <person name="Kawai Y."/>
            <person name="Isono Y."/>
            <person name="Nakamura Y."/>
            <person name="Nagahari K."/>
            <person name="Murakami K."/>
            <person name="Yasuda T."/>
            <person name="Iwayanagi T."/>
            <person name="Wagatsuma M."/>
            <person name="Shiratori A."/>
            <person name="Sudo H."/>
            <person name="Hosoiri T."/>
            <person name="Kaku Y."/>
            <person name="Kodaira H."/>
            <person name="Kondo H."/>
            <person name="Sugawara M."/>
            <person name="Takahashi M."/>
            <person name="Kanda K."/>
            <person name="Yokoi T."/>
            <person name="Furuya T."/>
            <person name="Kikkawa E."/>
            <person name="Omura Y."/>
            <person name="Abe K."/>
            <person name="Kamihara K."/>
            <person name="Katsuta N."/>
            <person name="Sato K."/>
            <person name="Tanikawa M."/>
            <person name="Yamazaki M."/>
            <person name="Ninomiya K."/>
            <person name="Ishibashi T."/>
            <person name="Yamashita H."/>
            <person name="Murakawa K."/>
            <person name="Fujimori K."/>
            <person name="Tanai H."/>
            <person name="Kimata M."/>
            <person name="Watanabe M."/>
            <person name="Hiraoka S."/>
            <person name="Chiba Y."/>
            <person name="Ishida S."/>
            <person name="Ono Y."/>
            <person name="Takiguchi S."/>
            <person name="Watanabe S."/>
            <person name="Yosida M."/>
            <person name="Hotuta T."/>
            <person name="Kusano J."/>
            <person name="Kanehori K."/>
            <person name="Takahashi-Fujii A."/>
            <person name="Hara H."/>
            <person name="Tanase T.-O."/>
            <person name="Nomura Y."/>
            <person name="Togiya S."/>
            <person name="Komai F."/>
            <person name="Hara R."/>
            <person name="Takeuchi K."/>
            <person name="Arita M."/>
            <person name="Imose N."/>
            <person name="Musashino K."/>
            <person name="Yuuki H."/>
            <person name="Oshima A."/>
            <person name="Sasaki N."/>
            <person name="Aotsuka S."/>
            <person name="Yoshikawa Y."/>
            <person name="Matsunawa H."/>
            <person name="Ichihara T."/>
            <person name="Shiohata N."/>
            <person name="Sano S."/>
            <person name="Moriya S."/>
            <person name="Momiyama H."/>
            <person name="Satoh N."/>
            <person name="Takami S."/>
            <person name="Terashima Y."/>
            <person name="Suzuki O."/>
            <person name="Nakagawa S."/>
            <person name="Senoh A."/>
            <person name="Mizoguchi H."/>
            <person name="Goto Y."/>
            <person name="Shimizu F."/>
            <person name="Wakebe H."/>
            <person name="Hishigaki H."/>
            <person name="Watanabe T."/>
            <person name="Sugiyama A."/>
            <person name="Takemoto M."/>
            <person name="Kawakami B."/>
            <person name="Yamazaki M."/>
            <person name="Watanabe K."/>
            <person name="Kumagai A."/>
            <person name="Itakura S."/>
            <person name="Fukuzumi Y."/>
            <person name="Fujimori Y."/>
            <person name="Komiyama M."/>
            <person name="Tashiro H."/>
            <person name="Tanigami A."/>
            <person name="Fujiwara T."/>
            <person name="Ono T."/>
            <person name="Yamada K."/>
            <person name="Fujii Y."/>
            <person name="Ozaki K."/>
            <person name="Hirao M."/>
            <person name="Ohmori Y."/>
            <person name="Kawabata A."/>
            <person name="Hikiji T."/>
            <person name="Kobatake N."/>
            <person name="Inagaki H."/>
            <person name="Ikema Y."/>
            <person name="Okamoto S."/>
            <person name="Okitani R."/>
            <person name="Kawakami T."/>
            <person name="Noguchi S."/>
            <person name="Itoh T."/>
            <person name="Shigeta K."/>
            <person name="Senba T."/>
            <person name="Matsumura K."/>
            <person name="Nakajima Y."/>
            <person name="Mizuno T."/>
            <person name="Morinaga M."/>
            <person name="Sasaki M."/>
            <person name="Togashi T."/>
            <person name="Oyama M."/>
            <person name="Hata H."/>
            <person name="Watanabe M."/>
            <person name="Komatsu T."/>
            <person name="Mizushima-Sugano J."/>
            <person name="Satoh T."/>
            <person name="Shirai Y."/>
            <person name="Takahashi Y."/>
            <person name="Nakagawa K."/>
            <person name="Okumura K."/>
            <person name="Nagase T."/>
            <person name="Nomura N."/>
            <person name="Kikuchi H."/>
            <person name="Masuho Y."/>
            <person name="Yamashita R."/>
            <person name="Nakai K."/>
            <person name="Yada T."/>
            <person name="Nakamura Y."/>
            <person name="Ohara O."/>
            <person name="Isogai T."/>
            <person name="Sugano S."/>
        </authorList>
    </citation>
    <scope>NUCLEOTIDE SEQUENCE [LARGE SCALE MRNA] (ISOFORMS 1 AND 3)</scope>
    <scope>VARIANT GLN-13</scope>
    <source>
        <tissue>Small intestine</tissue>
        <tissue>Thyroid</tissue>
    </source>
</reference>
<reference key="2">
    <citation type="journal article" date="2004" name="Nature">
        <title>The sequence and analysis of duplication-rich human chromosome 16.</title>
        <authorList>
            <person name="Martin J."/>
            <person name="Han C."/>
            <person name="Gordon L.A."/>
            <person name="Terry A."/>
            <person name="Prabhakar S."/>
            <person name="She X."/>
            <person name="Xie G."/>
            <person name="Hellsten U."/>
            <person name="Chan Y.M."/>
            <person name="Altherr M."/>
            <person name="Couronne O."/>
            <person name="Aerts A."/>
            <person name="Bajorek E."/>
            <person name="Black S."/>
            <person name="Blumer H."/>
            <person name="Branscomb E."/>
            <person name="Brown N.C."/>
            <person name="Bruno W.J."/>
            <person name="Buckingham J.M."/>
            <person name="Callen D.F."/>
            <person name="Campbell C.S."/>
            <person name="Campbell M.L."/>
            <person name="Campbell E.W."/>
            <person name="Caoile C."/>
            <person name="Challacombe J.F."/>
            <person name="Chasteen L.A."/>
            <person name="Chertkov O."/>
            <person name="Chi H.C."/>
            <person name="Christensen M."/>
            <person name="Clark L.M."/>
            <person name="Cohn J.D."/>
            <person name="Denys M."/>
            <person name="Detter J.C."/>
            <person name="Dickson M."/>
            <person name="Dimitrijevic-Bussod M."/>
            <person name="Escobar J."/>
            <person name="Fawcett J.J."/>
            <person name="Flowers D."/>
            <person name="Fotopulos D."/>
            <person name="Glavina T."/>
            <person name="Gomez M."/>
            <person name="Gonzales E."/>
            <person name="Goodstein D."/>
            <person name="Goodwin L.A."/>
            <person name="Grady D.L."/>
            <person name="Grigoriev I."/>
            <person name="Groza M."/>
            <person name="Hammon N."/>
            <person name="Hawkins T."/>
            <person name="Haydu L."/>
            <person name="Hildebrand C.E."/>
            <person name="Huang W."/>
            <person name="Israni S."/>
            <person name="Jett J."/>
            <person name="Jewett P.B."/>
            <person name="Kadner K."/>
            <person name="Kimball H."/>
            <person name="Kobayashi A."/>
            <person name="Krawczyk M.-C."/>
            <person name="Leyba T."/>
            <person name="Longmire J.L."/>
            <person name="Lopez F."/>
            <person name="Lou Y."/>
            <person name="Lowry S."/>
            <person name="Ludeman T."/>
            <person name="Manohar C.F."/>
            <person name="Mark G.A."/>
            <person name="McMurray K.L."/>
            <person name="Meincke L.J."/>
            <person name="Morgan J."/>
            <person name="Moyzis R.K."/>
            <person name="Mundt M.O."/>
            <person name="Munk A.C."/>
            <person name="Nandkeshwar R.D."/>
            <person name="Pitluck S."/>
            <person name="Pollard M."/>
            <person name="Predki P."/>
            <person name="Parson-Quintana B."/>
            <person name="Ramirez L."/>
            <person name="Rash S."/>
            <person name="Retterer J."/>
            <person name="Ricke D.O."/>
            <person name="Robinson D.L."/>
            <person name="Rodriguez A."/>
            <person name="Salamov A."/>
            <person name="Saunders E.H."/>
            <person name="Scott D."/>
            <person name="Shough T."/>
            <person name="Stallings R.L."/>
            <person name="Stalvey M."/>
            <person name="Sutherland R.D."/>
            <person name="Tapia R."/>
            <person name="Tesmer J.G."/>
            <person name="Thayer N."/>
            <person name="Thompson L.S."/>
            <person name="Tice H."/>
            <person name="Torney D.C."/>
            <person name="Tran-Gyamfi M."/>
            <person name="Tsai M."/>
            <person name="Ulanovsky L.E."/>
            <person name="Ustaszewska A."/>
            <person name="Vo N."/>
            <person name="White P.S."/>
            <person name="Williams A.L."/>
            <person name="Wills P.L."/>
            <person name="Wu J.-R."/>
            <person name="Wu K."/>
            <person name="Yang J."/>
            <person name="DeJong P."/>
            <person name="Bruce D."/>
            <person name="Doggett N.A."/>
            <person name="Deaven L."/>
            <person name="Schmutz J."/>
            <person name="Grimwood J."/>
            <person name="Richardson P."/>
            <person name="Rokhsar D.S."/>
            <person name="Eichler E.E."/>
            <person name="Gilna P."/>
            <person name="Lucas S.M."/>
            <person name="Myers R.M."/>
            <person name="Rubin E.M."/>
            <person name="Pennacchio L.A."/>
        </authorList>
    </citation>
    <scope>NUCLEOTIDE SEQUENCE [LARGE SCALE GENOMIC DNA]</scope>
</reference>
<reference key="3">
    <citation type="journal article" date="2004" name="Genome Res.">
        <title>The status, quality, and expansion of the NIH full-length cDNA project: the Mammalian Gene Collection (MGC).</title>
        <authorList>
            <consortium name="The MGC Project Team"/>
        </authorList>
    </citation>
    <scope>NUCLEOTIDE SEQUENCE [LARGE SCALE MRNA] OF 63-720 (ISOFORM 1)</scope>
    <source>
        <tissue>Brain</tissue>
        <tissue>Colon</tissue>
    </source>
</reference>
<reference key="4">
    <citation type="journal article" date="2014" name="Proc. Natl. Acad. Sci. U.S.A.">
        <title>G-protein coupled receptor BAI3 promotes myoblast fusion in vertebrates.</title>
        <authorList>
            <person name="Hamoud N."/>
            <person name="Tran V."/>
            <person name="Croteau L.P."/>
            <person name="Kania A."/>
            <person name="Cote J.F."/>
        </authorList>
    </citation>
    <scope>INTERACTION WITH ADGRB3</scope>
</reference>
<keyword id="KW-0025">Alternative splicing</keyword>
<keyword id="KW-0053">Apoptosis</keyword>
<keyword id="KW-0963">Cytoplasm</keyword>
<keyword id="KW-0581">Phagocytosis</keyword>
<keyword id="KW-1267">Proteomics identification</keyword>
<keyword id="KW-1185">Reference proteome</keyword>
<keyword id="KW-0729">SH3-binding</keyword>
<evidence type="ECO:0000250" key="1"/>
<evidence type="ECO:0000255" key="2">
    <source>
        <dbReference type="PROSITE-ProRule" id="PRU00664"/>
    </source>
</evidence>
<evidence type="ECO:0000269" key="3">
    <source>
    </source>
</evidence>
<evidence type="ECO:0000269" key="4">
    <source>
    </source>
</evidence>
<evidence type="ECO:0000303" key="5">
    <source>
    </source>
</evidence>
<evidence type="ECO:0000303" key="6">
    <source>
    </source>
</evidence>
<evidence type="ECO:0000305" key="7"/>
<proteinExistence type="evidence at protein level"/>
<sequence length="720" mass="81467">MAPPRNVVKIAIKMRDAIPQLIQLDQAKPLAAVLKEVCDAWSLTHSERYALQFADGHRRYITENNRAEIKNGSILCLSTAPDLEAEQLLGGLQSNSPEGRREALRRLVPLASDMIFAREVISRNGLQILGTIIEDGDDLGEVLALSLRAFSELMEHGVVSWETLSIPFVRKVVCYVNMNLMDASVPPLALGLLESVTLSSPALGQLVKSEVPLDRLLVHLQVMNQQLQTKAMALLTALLQGASPVERKHMLDYLWQRNLRQFIYKNIIHSAAPMGDEMAHHLYVLQALMLGLLEPRMRTPLDPYSQEQREQLQVLRQAAFEVEGESSGAGLSADRRRSLCAREFRKLGFSNSNPAQDLERVPPGLLALDNMLYFSRNAPSAYSRFVLENSSREDKHECPFARGSIQLTVLLCELLRVGEPCSETAQDFSPMFFGQDQSFHELFCVGIQLLNKTWKEMRATQEDFDKVMQVVREQLARTLALKPTSLELFRTKVNALTYGEVLRLRQTERLHQEGTLAPPILELREKLKPELMGLIRQQRLLRLCEGTLFRKISSRRRQDKLWFCCLSPNHKLLQYGDMEEGASPPTLESLPEQLPVADMRALLTGKDCPHVREKGSGKQNKDLYELAFSISYDRGEEEAYLNFIAPSKREFYLWTDGLSALLGSPMGSEQTRLDLEQLLTMETKLRLLELENVPIPERPPPVPPPPTNFNFCYDCSIAEP</sequence>
<gene>
    <name type="primary">ELMO3</name>
</gene>
<name>ELMO3_HUMAN</name>
<accession>Q96BJ8</accession>
<accession>B4DV86</accession>
<accession>Q9H8A5</accession>
<organism>
    <name type="scientific">Homo sapiens</name>
    <name type="common">Human</name>
    <dbReference type="NCBI Taxonomy" id="9606"/>
    <lineage>
        <taxon>Eukaryota</taxon>
        <taxon>Metazoa</taxon>
        <taxon>Chordata</taxon>
        <taxon>Craniata</taxon>
        <taxon>Vertebrata</taxon>
        <taxon>Euteleostomi</taxon>
        <taxon>Mammalia</taxon>
        <taxon>Eutheria</taxon>
        <taxon>Euarchontoglires</taxon>
        <taxon>Primates</taxon>
        <taxon>Haplorrhini</taxon>
        <taxon>Catarrhini</taxon>
        <taxon>Hominidae</taxon>
        <taxon>Homo</taxon>
    </lineage>
</organism>
<feature type="chain" id="PRO_0000153716" description="Engulfment and cell motility protein 3">
    <location>
        <begin position="1"/>
        <end position="720"/>
    </location>
</feature>
<feature type="domain" description="ELMO" evidence="2">
    <location>
        <begin position="307"/>
        <end position="479"/>
    </location>
</feature>
<feature type="domain" description="PH">
    <location>
        <begin position="542"/>
        <end position="664"/>
    </location>
</feature>
<feature type="short sequence motif" description="SH3-binding">
    <location>
        <begin position="696"/>
        <end position="706"/>
    </location>
</feature>
<feature type="splice variant" id="VSP_037341" description="In isoform 1." evidence="5 6">
    <location>
        <begin position="1"/>
        <end position="113"/>
    </location>
</feature>
<feature type="splice variant" id="VSP_037342" description="In isoform 3." evidence="5">
    <original>M</original>
    <variation>MARSSSLGRECGTPRSGLGKGGPPRPQGPQARCTLGRRCTVSGKCRRPRPSWTM</variation>
    <location>
        <position position="1"/>
    </location>
</feature>
<feature type="sequence variant" id="VAR_055402" description="In dbSNP:rs12923138." evidence="3">
    <original>K</original>
    <variation>Q</variation>
    <location>
        <position position="13"/>
    </location>
</feature>
<feature type="sequence variant" id="VAR_055403" description="In dbSNP:rs8058861.">
    <original>N</original>
    <variation>D</variation>
    <location>
        <position position="95"/>
    </location>
</feature>
<feature type="sequence variant" id="VAR_055404" description="In dbSNP:rs33948247.">
    <original>R</original>
    <variation>C</variation>
    <location>
        <position position="316"/>
    </location>
</feature>
<feature type="sequence conflict" description="In Ref. 1; BAG62598." evidence="7" ref="1">
    <original>N</original>
    <variation>S</variation>
    <location>
        <position position="65"/>
    </location>
</feature>
<feature type="sequence conflict" description="In Ref. 1; BAG62598." evidence="7" ref="1">
    <original>R</original>
    <variation>Q</variation>
    <location>
        <position position="555"/>
    </location>
</feature>